<accession>C4L5Z0</accession>
<reference key="1">
    <citation type="journal article" date="2011" name="J. Bacteriol.">
        <title>Complete genome sequence of the Thermophilic Bacterium Exiguobacterium sp. AT1b.</title>
        <authorList>
            <person name="Vishnivetskaya T.A."/>
            <person name="Lucas S."/>
            <person name="Copeland A."/>
            <person name="Lapidus A."/>
            <person name="Glavina del Rio T."/>
            <person name="Dalin E."/>
            <person name="Tice H."/>
            <person name="Bruce D.C."/>
            <person name="Goodwin L.A."/>
            <person name="Pitluck S."/>
            <person name="Saunders E."/>
            <person name="Brettin T."/>
            <person name="Detter C."/>
            <person name="Han C."/>
            <person name="Larimer F."/>
            <person name="Land M.L."/>
            <person name="Hauser L.J."/>
            <person name="Kyrpides N.C."/>
            <person name="Ovchinnikova G."/>
            <person name="Kathariou S."/>
            <person name="Ramaley R.F."/>
            <person name="Rodrigues D.F."/>
            <person name="Hendrix C."/>
            <person name="Richardson P."/>
            <person name="Tiedje J.M."/>
        </authorList>
    </citation>
    <scope>NUCLEOTIDE SEQUENCE [LARGE SCALE GENOMIC DNA]</scope>
    <source>
        <strain>ATCC BAA-1283 / AT1b</strain>
    </source>
</reference>
<dbReference type="EMBL" id="CP001615">
    <property type="protein sequence ID" value="ACQ71796.1"/>
    <property type="molecule type" value="Genomic_DNA"/>
</dbReference>
<dbReference type="RefSeq" id="WP_015881355.1">
    <property type="nucleotide sequence ID" value="NC_012673.1"/>
</dbReference>
<dbReference type="SMR" id="C4L5Z0"/>
<dbReference type="STRING" id="360911.EAT1b_2882"/>
<dbReference type="GeneID" id="94372454"/>
<dbReference type="KEGG" id="eat:EAT1b_2882"/>
<dbReference type="eggNOG" id="COG1349">
    <property type="taxonomic scope" value="Bacteria"/>
</dbReference>
<dbReference type="HOGENOM" id="CLU_095708_0_0_9"/>
<dbReference type="OrthoDB" id="1706183at2"/>
<dbReference type="Proteomes" id="UP000000716">
    <property type="component" value="Chromosome"/>
</dbReference>
<dbReference type="GO" id="GO:0003677">
    <property type="term" value="F:DNA binding"/>
    <property type="evidence" value="ECO:0007669"/>
    <property type="project" value="UniProtKB-KW"/>
</dbReference>
<dbReference type="GO" id="GO:0003700">
    <property type="term" value="F:DNA-binding transcription factor activity"/>
    <property type="evidence" value="ECO:0007669"/>
    <property type="project" value="UniProtKB-UniRule"/>
</dbReference>
<dbReference type="GO" id="GO:0006633">
    <property type="term" value="P:fatty acid biosynthetic process"/>
    <property type="evidence" value="ECO:0007669"/>
    <property type="project" value="UniProtKB-KW"/>
</dbReference>
<dbReference type="GO" id="GO:0045892">
    <property type="term" value="P:negative regulation of DNA-templated transcription"/>
    <property type="evidence" value="ECO:0007669"/>
    <property type="project" value="UniProtKB-UniRule"/>
</dbReference>
<dbReference type="GO" id="GO:0045717">
    <property type="term" value="P:negative regulation of fatty acid biosynthetic process"/>
    <property type="evidence" value="ECO:0007669"/>
    <property type="project" value="UniProtKB-UniRule"/>
</dbReference>
<dbReference type="CDD" id="cd03440">
    <property type="entry name" value="hot_dog"/>
    <property type="match status" value="1"/>
</dbReference>
<dbReference type="Gene3D" id="3.10.129.10">
    <property type="entry name" value="Hotdog Thioesterase"/>
    <property type="match status" value="1"/>
</dbReference>
<dbReference type="Gene3D" id="1.10.10.10">
    <property type="entry name" value="Winged helix-like DNA-binding domain superfamily/Winged helix DNA-binding domain"/>
    <property type="match status" value="1"/>
</dbReference>
<dbReference type="HAMAP" id="MF_01814">
    <property type="entry name" value="Transcrip_fact_FapR"/>
    <property type="match status" value="1"/>
</dbReference>
<dbReference type="InterPro" id="IPR029069">
    <property type="entry name" value="HotDog_dom_sf"/>
</dbReference>
<dbReference type="InterPro" id="IPR006683">
    <property type="entry name" value="Thioestr_dom"/>
</dbReference>
<dbReference type="InterPro" id="IPR017275">
    <property type="entry name" value="Transcription_factor_FapR"/>
</dbReference>
<dbReference type="InterPro" id="IPR036388">
    <property type="entry name" value="WH-like_DNA-bd_sf"/>
</dbReference>
<dbReference type="NCBIfam" id="NF003359">
    <property type="entry name" value="PRK04424.1"/>
    <property type="match status" value="1"/>
</dbReference>
<dbReference type="Pfam" id="PF03061">
    <property type="entry name" value="4HBT"/>
    <property type="match status" value="1"/>
</dbReference>
<dbReference type="PIRSF" id="PIRSF037733">
    <property type="entry name" value="Transcription_factor_FapR"/>
    <property type="match status" value="1"/>
</dbReference>
<dbReference type="SUPFAM" id="SSF54637">
    <property type="entry name" value="Thioesterase/thiol ester dehydrase-isomerase"/>
    <property type="match status" value="1"/>
</dbReference>
<organism>
    <name type="scientific">Exiguobacterium sp. (strain ATCC BAA-1283 / AT1b)</name>
    <dbReference type="NCBI Taxonomy" id="360911"/>
    <lineage>
        <taxon>Bacteria</taxon>
        <taxon>Bacillati</taxon>
        <taxon>Bacillota</taxon>
        <taxon>Bacilli</taxon>
        <taxon>Bacillales</taxon>
        <taxon>Bacillales Family XII. Incertae Sedis</taxon>
        <taxon>Exiguobacterium</taxon>
    </lineage>
</organism>
<keyword id="KW-0238">DNA-binding</keyword>
<keyword id="KW-0275">Fatty acid biosynthesis</keyword>
<keyword id="KW-0276">Fatty acid metabolism</keyword>
<keyword id="KW-0444">Lipid biosynthesis</keyword>
<keyword id="KW-0443">Lipid metabolism</keyword>
<keyword id="KW-0678">Repressor</keyword>
<keyword id="KW-0804">Transcription</keyword>
<keyword id="KW-0805">Transcription regulation</keyword>
<sequence length="189" mass="21688">MRVPKKERQRLLQETIEHNPFIKDEELSKQFSVSIQTIRLDRMELKIPEVRERIKHVASEHLDEVKSLSMSEVIGDMIDLKLDDSAISVLDIEKEHVFSRNEIARGHVLFAQANSLAVALINDELALTTKADIRFSRQVHLGERVVAKARVMKLRGDGRTDVTVESYVGEECVFDGDFTIYRRGEEEQA</sequence>
<evidence type="ECO:0000255" key="1">
    <source>
        <dbReference type="HAMAP-Rule" id="MF_01814"/>
    </source>
</evidence>
<proteinExistence type="inferred from homology"/>
<comment type="function">
    <text evidence="1">Transcriptional factor involved in regulation of membrane lipid biosynthesis by repressing genes involved in fatty acid and phospholipid metabolism.</text>
</comment>
<comment type="similarity">
    <text evidence="1">Belongs to the FapR family.</text>
</comment>
<gene>
    <name evidence="1" type="primary">fapR</name>
    <name type="ordered locus">EAT1b_2882</name>
</gene>
<feature type="chain" id="PRO_1000215993" description="Transcription factor FapR">
    <location>
        <begin position="1"/>
        <end position="189"/>
    </location>
</feature>
<name>FAPR_EXISA</name>
<protein>
    <recommendedName>
        <fullName evidence="1">Transcription factor FapR</fullName>
    </recommendedName>
    <alternativeName>
        <fullName evidence="1">Fatty acid and phospholipid biosynthesis regulator</fullName>
    </alternativeName>
</protein>